<proteinExistence type="evidence at protein level"/>
<dbReference type="EC" id="3.1.1.4"/>
<dbReference type="SMR" id="P20249"/>
<dbReference type="GO" id="GO:0005576">
    <property type="term" value="C:extracellular region"/>
    <property type="evidence" value="ECO:0007669"/>
    <property type="project" value="UniProtKB-SubCell"/>
</dbReference>
<dbReference type="GO" id="GO:0005509">
    <property type="term" value="F:calcium ion binding"/>
    <property type="evidence" value="ECO:0007669"/>
    <property type="project" value="InterPro"/>
</dbReference>
<dbReference type="GO" id="GO:0047498">
    <property type="term" value="F:calcium-dependent phospholipase A2 activity"/>
    <property type="evidence" value="ECO:0007669"/>
    <property type="project" value="TreeGrafter"/>
</dbReference>
<dbReference type="GO" id="GO:0005543">
    <property type="term" value="F:phospholipid binding"/>
    <property type="evidence" value="ECO:0007669"/>
    <property type="project" value="TreeGrafter"/>
</dbReference>
<dbReference type="GO" id="GO:0050482">
    <property type="term" value="P:arachidonate secretion"/>
    <property type="evidence" value="ECO:0007669"/>
    <property type="project" value="InterPro"/>
</dbReference>
<dbReference type="GO" id="GO:0016042">
    <property type="term" value="P:lipid catabolic process"/>
    <property type="evidence" value="ECO:0007669"/>
    <property type="project" value="UniProtKB-KW"/>
</dbReference>
<dbReference type="GO" id="GO:0042130">
    <property type="term" value="P:negative regulation of T cell proliferation"/>
    <property type="evidence" value="ECO:0007669"/>
    <property type="project" value="TreeGrafter"/>
</dbReference>
<dbReference type="GO" id="GO:0006644">
    <property type="term" value="P:phospholipid metabolic process"/>
    <property type="evidence" value="ECO:0007669"/>
    <property type="project" value="InterPro"/>
</dbReference>
<dbReference type="CDD" id="cd00125">
    <property type="entry name" value="PLA2c"/>
    <property type="match status" value="1"/>
</dbReference>
<dbReference type="FunFam" id="1.20.90.10:FF:000001">
    <property type="entry name" value="Basic phospholipase A2 homolog"/>
    <property type="match status" value="1"/>
</dbReference>
<dbReference type="Gene3D" id="1.20.90.10">
    <property type="entry name" value="Phospholipase A2 domain"/>
    <property type="match status" value="1"/>
</dbReference>
<dbReference type="InterPro" id="IPR001211">
    <property type="entry name" value="PLipase_A2"/>
</dbReference>
<dbReference type="InterPro" id="IPR033112">
    <property type="entry name" value="PLipase_A2_Asp_AS"/>
</dbReference>
<dbReference type="InterPro" id="IPR016090">
    <property type="entry name" value="PLipase_A2_dom"/>
</dbReference>
<dbReference type="InterPro" id="IPR036444">
    <property type="entry name" value="PLipase_A2_dom_sf"/>
</dbReference>
<dbReference type="InterPro" id="IPR033113">
    <property type="entry name" value="PLipase_A2_His_AS"/>
</dbReference>
<dbReference type="PANTHER" id="PTHR11716">
    <property type="entry name" value="PHOSPHOLIPASE A2 FAMILY MEMBER"/>
    <property type="match status" value="1"/>
</dbReference>
<dbReference type="PANTHER" id="PTHR11716:SF9">
    <property type="entry name" value="PHOSPHOLIPASE A2, MEMBRANE ASSOCIATED"/>
    <property type="match status" value="1"/>
</dbReference>
<dbReference type="Pfam" id="PF00068">
    <property type="entry name" value="Phospholip_A2_1"/>
    <property type="match status" value="1"/>
</dbReference>
<dbReference type="PRINTS" id="PR00389">
    <property type="entry name" value="PHPHLIPASEA2"/>
</dbReference>
<dbReference type="SMART" id="SM00085">
    <property type="entry name" value="PA2c"/>
    <property type="match status" value="1"/>
</dbReference>
<dbReference type="SUPFAM" id="SSF48619">
    <property type="entry name" value="Phospholipase A2, PLA2"/>
    <property type="match status" value="1"/>
</dbReference>
<dbReference type="PROSITE" id="PS00119">
    <property type="entry name" value="PA2_ASP"/>
    <property type="match status" value="1"/>
</dbReference>
<dbReference type="PROSITE" id="PS00118">
    <property type="entry name" value="PA2_HIS"/>
    <property type="match status" value="1"/>
</dbReference>
<reference key="1">
    <citation type="journal article" date="1989" name="J. Biol. Chem.">
        <title>Revised amino acid sequence, crystallization, and preliminary X-ray diffraction analysis of acidic phospholipase A2 from the venom of Agkistrodon halys blomhoffii.</title>
        <authorList>
            <person name="Tomoo K."/>
            <person name="Ohishi H."/>
            <person name="Ishida T."/>
            <person name="Inoue M."/>
            <person name="Ikeda K."/>
            <person name="Aoki Y."/>
            <person name="Samejima Y."/>
        </authorList>
    </citation>
    <scope>PROTEIN SEQUENCE</scope>
    <source>
        <tissue>Venom</tissue>
    </source>
</reference>
<reference key="2">
    <citation type="journal article" date="1974" name="FEBS Lett.">
        <title>Complete amino acid sequence of phospholipase A2-II isolated from Agkistrodon halys blomhoffii venom.</title>
        <authorList>
            <person name="Samejima Y."/>
            <person name="Iwanaga S."/>
            <person name="Suzuki T."/>
        </authorList>
    </citation>
    <scope>PRELIMINARY PROTEIN SEQUENCE</scope>
    <source>
        <tissue>Venom</tissue>
    </source>
</reference>
<reference key="3">
    <citation type="journal article" date="1992" name="Biochem. Biophys. Res. Commun.">
        <title>Structure of acidic phospholipase A2 for the venom of Agkistrodon halys blomhoffii at 2.8-A resolution.</title>
        <authorList>
            <person name="Tomoo K."/>
            <person name="Ohishi H."/>
            <person name="Doi M."/>
            <person name="Ishida T."/>
            <person name="Inoue M."/>
            <person name="Ikeda K."/>
            <person name="Hata Y."/>
            <person name="Samejima Y."/>
        </authorList>
    </citation>
    <scope>X-RAY CRYSTALLOGRAPHY (2.8 ANGSTROMS) IN COMPLEX WITH CALCIUM ION</scope>
    <scope>COFACTOR</scope>
    <scope>DISULFIDE BONDS</scope>
</reference>
<name>PA2A_GLOBL</name>
<organism>
    <name type="scientific">Gloydius blomhoffii</name>
    <name type="common">Mamushi</name>
    <name type="synonym">Agkistrodon halys blomhoffi</name>
    <dbReference type="NCBI Taxonomy" id="242054"/>
    <lineage>
        <taxon>Eukaryota</taxon>
        <taxon>Metazoa</taxon>
        <taxon>Chordata</taxon>
        <taxon>Craniata</taxon>
        <taxon>Vertebrata</taxon>
        <taxon>Euteleostomi</taxon>
        <taxon>Lepidosauria</taxon>
        <taxon>Squamata</taxon>
        <taxon>Bifurcata</taxon>
        <taxon>Unidentata</taxon>
        <taxon>Episquamata</taxon>
        <taxon>Toxicofera</taxon>
        <taxon>Serpentes</taxon>
        <taxon>Colubroidea</taxon>
        <taxon>Viperidae</taxon>
        <taxon>Crotalinae</taxon>
        <taxon>Gloydius</taxon>
    </lineage>
</organism>
<sequence length="122" mass="13664">SLMQFETLIMKIAGRSGIWYYGSYGCYCGAGGQGRPQDASDRCCFVHDCCYGKVTGCDPKLDVYTYTEENGAIVCGGDDPCKKQICECDKDAAICFRDNIDTYDNKYWFFPAKNCQEESEPC</sequence>
<evidence type="ECO:0000250" key="1">
    <source>
        <dbReference type="UniProtKB" id="O42191"/>
    </source>
</evidence>
<evidence type="ECO:0000250" key="2">
    <source>
        <dbReference type="UniProtKB" id="P06859"/>
    </source>
</evidence>
<evidence type="ECO:0000255" key="3">
    <source>
        <dbReference type="PROSITE-ProRule" id="PRU10035"/>
    </source>
</evidence>
<evidence type="ECO:0000255" key="4">
    <source>
        <dbReference type="PROSITE-ProRule" id="PRU10036"/>
    </source>
</evidence>
<evidence type="ECO:0000269" key="5">
    <source>
    </source>
</evidence>
<evidence type="ECO:0000269" key="6">
    <source>
    </source>
</evidence>
<evidence type="ECO:0000305" key="7"/>
<evidence type="ECO:0000305" key="8">
    <source>
    </source>
</evidence>
<keyword id="KW-0106">Calcium</keyword>
<keyword id="KW-0903">Direct protein sequencing</keyword>
<keyword id="KW-1015">Disulfide bond</keyword>
<keyword id="KW-0378">Hydrolase</keyword>
<keyword id="KW-0442">Lipid degradation</keyword>
<keyword id="KW-0443">Lipid metabolism</keyword>
<keyword id="KW-0479">Metal-binding</keyword>
<keyword id="KW-0964">Secreted</keyword>
<protein>
    <recommendedName>
        <fullName>Acidic phospholipase A2</fullName>
        <shortName>PA2-II</shortName>
        <shortName>svPLA2</shortName>
        <ecNumber>3.1.1.4</ecNumber>
    </recommendedName>
    <alternativeName>
        <fullName>Phosphatidylcholine 2-acylhydrolase</fullName>
    </alternativeName>
</protein>
<accession>P20249</accession>
<comment type="function">
    <text>PLA2 catalyzes the calcium-dependent hydrolysis of the 2-acyl groups in 3-sn-phosphoglycerides.</text>
</comment>
<comment type="catalytic activity">
    <reaction evidence="3 4">
        <text>a 1,2-diacyl-sn-glycero-3-phosphocholine + H2O = a 1-acyl-sn-glycero-3-phosphocholine + a fatty acid + H(+)</text>
        <dbReference type="Rhea" id="RHEA:15801"/>
        <dbReference type="ChEBI" id="CHEBI:15377"/>
        <dbReference type="ChEBI" id="CHEBI:15378"/>
        <dbReference type="ChEBI" id="CHEBI:28868"/>
        <dbReference type="ChEBI" id="CHEBI:57643"/>
        <dbReference type="ChEBI" id="CHEBI:58168"/>
        <dbReference type="EC" id="3.1.1.4"/>
    </reaction>
</comment>
<comment type="cofactor">
    <cofactor evidence="8">
        <name>Ca(2+)</name>
        <dbReference type="ChEBI" id="CHEBI:29108"/>
    </cofactor>
    <text evidence="8">Binds 1 Ca(2+) ion.</text>
</comment>
<comment type="subunit">
    <text>Monomer.</text>
</comment>
<comment type="subcellular location">
    <subcellularLocation>
        <location>Secreted</location>
    </subcellularLocation>
</comment>
<comment type="tissue specificity">
    <text>Expressed by the venom gland.</text>
</comment>
<comment type="miscellaneous">
    <text>Is not neurotoxic.</text>
</comment>
<comment type="similarity">
    <text evidence="7">Belongs to the phospholipase A2 family. Group II subfamily. D49 sub-subfamily.</text>
</comment>
<feature type="chain" id="PRO_0000161596" description="Acidic phospholipase A2" evidence="6">
    <location>
        <begin position="1"/>
        <end position="122"/>
    </location>
</feature>
<feature type="active site" evidence="2">
    <location>
        <position position="47"/>
    </location>
</feature>
<feature type="active site" evidence="2">
    <location>
        <position position="89"/>
    </location>
</feature>
<feature type="binding site" evidence="5">
    <location>
        <position position="27"/>
    </location>
    <ligand>
        <name>Ca(2+)</name>
        <dbReference type="ChEBI" id="CHEBI:29108"/>
    </ligand>
</feature>
<feature type="binding site" evidence="5">
    <location>
        <position position="29"/>
    </location>
    <ligand>
        <name>Ca(2+)</name>
        <dbReference type="ChEBI" id="CHEBI:29108"/>
    </ligand>
</feature>
<feature type="binding site" evidence="8">
    <location>
        <position position="31"/>
    </location>
    <ligand>
        <name>Ca(2+)</name>
        <dbReference type="ChEBI" id="CHEBI:29108"/>
    </ligand>
</feature>
<feature type="binding site" evidence="5">
    <location>
        <position position="48"/>
    </location>
    <ligand>
        <name>Ca(2+)</name>
        <dbReference type="ChEBI" id="CHEBI:29108"/>
    </ligand>
</feature>
<feature type="disulfide bond" evidence="1">
    <location>
        <begin position="26"/>
        <end position="115"/>
    </location>
</feature>
<feature type="disulfide bond" evidence="1">
    <location>
        <begin position="28"/>
        <end position="44"/>
    </location>
</feature>
<feature type="disulfide bond" evidence="1">
    <location>
        <begin position="43"/>
        <end position="95"/>
    </location>
</feature>
<feature type="disulfide bond" evidence="1">
    <location>
        <begin position="49"/>
        <end position="122"/>
    </location>
</feature>
<feature type="disulfide bond" evidence="1">
    <location>
        <begin position="50"/>
        <end position="88"/>
    </location>
</feature>
<feature type="disulfide bond" evidence="1">
    <location>
        <begin position="57"/>
        <end position="81"/>
    </location>
</feature>
<feature type="disulfide bond" evidence="1">
    <location>
        <begin position="75"/>
        <end position="86"/>
    </location>
</feature>